<protein>
    <recommendedName>
        <fullName evidence="1">Ribosome-recycling factor</fullName>
        <shortName evidence="1">RRF</shortName>
    </recommendedName>
    <alternativeName>
        <fullName evidence="1">Ribosome-releasing factor</fullName>
    </alternativeName>
</protein>
<proteinExistence type="inferred from homology"/>
<sequence length="186" mass="20921">MDKVTLKKNLQEKMDKALKVLDHELKGLRTGRASVNLLDSVTVEAYGDRMPLSQVASLTTPDARTINVQVWDKSMVSSVEKAITVANLGLTPSSDGQLIRLPIPALTEERRKELAKLAHKYGEDTKISLRNIRRDGNEELKKMEKDNIIAKDEHHSLAEQVQKLTDEYSSKVDSAIKQKEQEIMTV</sequence>
<evidence type="ECO:0000255" key="1">
    <source>
        <dbReference type="HAMAP-Rule" id="MF_00040"/>
    </source>
</evidence>
<organism>
    <name type="scientific">Rickettsia bellii (strain OSU 85-389)</name>
    <dbReference type="NCBI Taxonomy" id="391896"/>
    <lineage>
        <taxon>Bacteria</taxon>
        <taxon>Pseudomonadati</taxon>
        <taxon>Pseudomonadota</taxon>
        <taxon>Alphaproteobacteria</taxon>
        <taxon>Rickettsiales</taxon>
        <taxon>Rickettsiaceae</taxon>
        <taxon>Rickettsieae</taxon>
        <taxon>Rickettsia</taxon>
        <taxon>belli group</taxon>
    </lineage>
</organism>
<comment type="function">
    <text evidence="1">Responsible for the release of ribosomes from messenger RNA at the termination of protein biosynthesis. May increase the efficiency of translation by recycling ribosomes from one round of translation to another.</text>
</comment>
<comment type="subcellular location">
    <subcellularLocation>
        <location evidence="1">Cytoplasm</location>
    </subcellularLocation>
</comment>
<comment type="similarity">
    <text evidence="1">Belongs to the RRF family.</text>
</comment>
<accession>A8GV48</accession>
<gene>
    <name evidence="1" type="primary">frr</name>
    <name type="ordered locus">A1I_01645</name>
</gene>
<feature type="chain" id="PRO_1000003248" description="Ribosome-recycling factor">
    <location>
        <begin position="1"/>
        <end position="186"/>
    </location>
</feature>
<dbReference type="EMBL" id="CP000849">
    <property type="protein sequence ID" value="ABV78719.1"/>
    <property type="molecule type" value="Genomic_DNA"/>
</dbReference>
<dbReference type="RefSeq" id="WP_011477791.1">
    <property type="nucleotide sequence ID" value="NC_009883.1"/>
</dbReference>
<dbReference type="SMR" id="A8GV48"/>
<dbReference type="KEGG" id="rbo:A1I_01645"/>
<dbReference type="HOGENOM" id="CLU_073981_2_1_5"/>
<dbReference type="GO" id="GO:0005829">
    <property type="term" value="C:cytosol"/>
    <property type="evidence" value="ECO:0007669"/>
    <property type="project" value="GOC"/>
</dbReference>
<dbReference type="GO" id="GO:0043023">
    <property type="term" value="F:ribosomal large subunit binding"/>
    <property type="evidence" value="ECO:0007669"/>
    <property type="project" value="TreeGrafter"/>
</dbReference>
<dbReference type="GO" id="GO:0002184">
    <property type="term" value="P:cytoplasmic translational termination"/>
    <property type="evidence" value="ECO:0007669"/>
    <property type="project" value="TreeGrafter"/>
</dbReference>
<dbReference type="CDD" id="cd00520">
    <property type="entry name" value="RRF"/>
    <property type="match status" value="1"/>
</dbReference>
<dbReference type="FunFam" id="1.10.132.20:FF:000001">
    <property type="entry name" value="Ribosome-recycling factor"/>
    <property type="match status" value="1"/>
</dbReference>
<dbReference type="FunFam" id="3.30.1360.40:FF:000001">
    <property type="entry name" value="Ribosome-recycling factor"/>
    <property type="match status" value="1"/>
</dbReference>
<dbReference type="Gene3D" id="3.30.1360.40">
    <property type="match status" value="1"/>
</dbReference>
<dbReference type="Gene3D" id="1.10.132.20">
    <property type="entry name" value="Ribosome-recycling factor"/>
    <property type="match status" value="1"/>
</dbReference>
<dbReference type="HAMAP" id="MF_00040">
    <property type="entry name" value="RRF"/>
    <property type="match status" value="1"/>
</dbReference>
<dbReference type="InterPro" id="IPR002661">
    <property type="entry name" value="Ribosome_recyc_fac"/>
</dbReference>
<dbReference type="InterPro" id="IPR023584">
    <property type="entry name" value="Ribosome_recyc_fac_dom"/>
</dbReference>
<dbReference type="InterPro" id="IPR036191">
    <property type="entry name" value="RRF_sf"/>
</dbReference>
<dbReference type="NCBIfam" id="TIGR00496">
    <property type="entry name" value="frr"/>
    <property type="match status" value="1"/>
</dbReference>
<dbReference type="PANTHER" id="PTHR20982:SF3">
    <property type="entry name" value="MITOCHONDRIAL RIBOSOME RECYCLING FACTOR PSEUDO 1"/>
    <property type="match status" value="1"/>
</dbReference>
<dbReference type="PANTHER" id="PTHR20982">
    <property type="entry name" value="RIBOSOME RECYCLING FACTOR"/>
    <property type="match status" value="1"/>
</dbReference>
<dbReference type="Pfam" id="PF01765">
    <property type="entry name" value="RRF"/>
    <property type="match status" value="1"/>
</dbReference>
<dbReference type="SUPFAM" id="SSF55194">
    <property type="entry name" value="Ribosome recycling factor, RRF"/>
    <property type="match status" value="1"/>
</dbReference>
<name>RRF_RICB8</name>
<keyword id="KW-0963">Cytoplasm</keyword>
<keyword id="KW-0648">Protein biosynthesis</keyword>
<reference key="1">
    <citation type="submission" date="2007-09" db="EMBL/GenBank/DDBJ databases">
        <title>Complete genome sequencing of Rickettsia bellii.</title>
        <authorList>
            <person name="Madan A."/>
            <person name="Lee H."/>
            <person name="Madan A."/>
            <person name="Yoon J.-G."/>
            <person name="Ryu G.-Y."/>
            <person name="Dasch G."/>
            <person name="Ereemeva M."/>
        </authorList>
    </citation>
    <scope>NUCLEOTIDE SEQUENCE [LARGE SCALE GENOMIC DNA]</scope>
    <source>
        <strain>OSU 85-389</strain>
    </source>
</reference>